<accession>Q9SV30</accession>
<reference key="1">
    <citation type="journal article" date="2000" name="Nature">
        <title>Sequence and analysis of chromosome 3 of the plant Arabidopsis thaliana.</title>
        <authorList>
            <person name="Salanoubat M."/>
            <person name="Lemcke K."/>
            <person name="Rieger M."/>
            <person name="Ansorge W."/>
            <person name="Unseld M."/>
            <person name="Fartmann B."/>
            <person name="Valle G."/>
            <person name="Bloecker H."/>
            <person name="Perez-Alonso M."/>
            <person name="Obermaier B."/>
            <person name="Delseny M."/>
            <person name="Boutry M."/>
            <person name="Grivell L.A."/>
            <person name="Mache R."/>
            <person name="Puigdomenech P."/>
            <person name="De Simone V."/>
            <person name="Choisne N."/>
            <person name="Artiguenave F."/>
            <person name="Robert C."/>
            <person name="Brottier P."/>
            <person name="Wincker P."/>
            <person name="Cattolico L."/>
            <person name="Weissenbach J."/>
            <person name="Saurin W."/>
            <person name="Quetier F."/>
            <person name="Schaefer M."/>
            <person name="Mueller-Auer S."/>
            <person name="Gabel C."/>
            <person name="Fuchs M."/>
            <person name="Benes V."/>
            <person name="Wurmbach E."/>
            <person name="Drzonek H."/>
            <person name="Erfle H."/>
            <person name="Jordan N."/>
            <person name="Bangert S."/>
            <person name="Wiedelmann R."/>
            <person name="Kranz H."/>
            <person name="Voss H."/>
            <person name="Holland R."/>
            <person name="Brandt P."/>
            <person name="Nyakatura G."/>
            <person name="Vezzi A."/>
            <person name="D'Angelo M."/>
            <person name="Pallavicini A."/>
            <person name="Toppo S."/>
            <person name="Simionati B."/>
            <person name="Conrad A."/>
            <person name="Hornischer K."/>
            <person name="Kauer G."/>
            <person name="Loehnert T.-H."/>
            <person name="Nordsiek G."/>
            <person name="Reichelt J."/>
            <person name="Scharfe M."/>
            <person name="Schoen O."/>
            <person name="Bargues M."/>
            <person name="Terol J."/>
            <person name="Climent J."/>
            <person name="Navarro P."/>
            <person name="Collado C."/>
            <person name="Perez-Perez A."/>
            <person name="Ottenwaelder B."/>
            <person name="Duchemin D."/>
            <person name="Cooke R."/>
            <person name="Laudie M."/>
            <person name="Berger-Llauro C."/>
            <person name="Purnelle B."/>
            <person name="Masuy D."/>
            <person name="de Haan M."/>
            <person name="Maarse A.C."/>
            <person name="Alcaraz J.-P."/>
            <person name="Cottet A."/>
            <person name="Casacuberta E."/>
            <person name="Monfort A."/>
            <person name="Argiriou A."/>
            <person name="Flores M."/>
            <person name="Liguori R."/>
            <person name="Vitale D."/>
            <person name="Mannhaupt G."/>
            <person name="Haase D."/>
            <person name="Schoof H."/>
            <person name="Rudd S."/>
            <person name="Zaccaria P."/>
            <person name="Mewes H.-W."/>
            <person name="Mayer K.F.X."/>
            <person name="Kaul S."/>
            <person name="Town C.D."/>
            <person name="Koo H.L."/>
            <person name="Tallon L.J."/>
            <person name="Jenkins J."/>
            <person name="Rooney T."/>
            <person name="Rizzo M."/>
            <person name="Walts A."/>
            <person name="Utterback T."/>
            <person name="Fujii C.Y."/>
            <person name="Shea T.P."/>
            <person name="Creasy T.H."/>
            <person name="Haas B."/>
            <person name="Maiti R."/>
            <person name="Wu D."/>
            <person name="Peterson J."/>
            <person name="Van Aken S."/>
            <person name="Pai G."/>
            <person name="Militscher J."/>
            <person name="Sellers P."/>
            <person name="Gill J.E."/>
            <person name="Feldblyum T.V."/>
            <person name="Preuss D."/>
            <person name="Lin X."/>
            <person name="Nierman W.C."/>
            <person name="Salzberg S.L."/>
            <person name="White O."/>
            <person name="Venter J.C."/>
            <person name="Fraser C.M."/>
            <person name="Kaneko T."/>
            <person name="Nakamura Y."/>
            <person name="Sato S."/>
            <person name="Kato T."/>
            <person name="Asamizu E."/>
            <person name="Sasamoto S."/>
            <person name="Kimura T."/>
            <person name="Idesawa K."/>
            <person name="Kawashima K."/>
            <person name="Kishida Y."/>
            <person name="Kiyokawa C."/>
            <person name="Kohara M."/>
            <person name="Matsumoto M."/>
            <person name="Matsuno A."/>
            <person name="Muraki A."/>
            <person name="Nakayama S."/>
            <person name="Nakazaki N."/>
            <person name="Shinpo S."/>
            <person name="Takeuchi C."/>
            <person name="Wada T."/>
            <person name="Watanabe A."/>
            <person name="Yamada M."/>
            <person name="Yasuda M."/>
            <person name="Tabata S."/>
        </authorList>
    </citation>
    <scope>NUCLEOTIDE SEQUENCE [LARGE SCALE GENOMIC DNA]</scope>
    <source>
        <strain>cv. Columbia</strain>
    </source>
</reference>
<reference key="2">
    <citation type="journal article" date="2017" name="Plant J.">
        <title>Araport11: a complete reannotation of the Arabidopsis thaliana reference genome.</title>
        <authorList>
            <person name="Cheng C.Y."/>
            <person name="Krishnakumar V."/>
            <person name="Chan A.P."/>
            <person name="Thibaud-Nissen F."/>
            <person name="Schobel S."/>
            <person name="Town C.D."/>
        </authorList>
    </citation>
    <scope>GENOME REANNOTATION</scope>
    <source>
        <strain>cv. Columbia</strain>
    </source>
</reference>
<reference key="3">
    <citation type="journal article" date="2003" name="Science">
        <title>Empirical analysis of transcriptional activity in the Arabidopsis genome.</title>
        <authorList>
            <person name="Yamada K."/>
            <person name="Lim J."/>
            <person name="Dale J.M."/>
            <person name="Chen H."/>
            <person name="Shinn P."/>
            <person name="Palm C.J."/>
            <person name="Southwick A.M."/>
            <person name="Wu H.C."/>
            <person name="Kim C.J."/>
            <person name="Nguyen M."/>
            <person name="Pham P.K."/>
            <person name="Cheuk R.F."/>
            <person name="Karlin-Newmann G."/>
            <person name="Liu S.X."/>
            <person name="Lam B."/>
            <person name="Sakano H."/>
            <person name="Wu T."/>
            <person name="Yu G."/>
            <person name="Miranda M."/>
            <person name="Quach H.L."/>
            <person name="Tripp M."/>
            <person name="Chang C.H."/>
            <person name="Lee J.M."/>
            <person name="Toriumi M.J."/>
            <person name="Chan M.M."/>
            <person name="Tang C.C."/>
            <person name="Onodera C.S."/>
            <person name="Deng J.M."/>
            <person name="Akiyama K."/>
            <person name="Ansari Y."/>
            <person name="Arakawa T."/>
            <person name="Banh J."/>
            <person name="Banno F."/>
            <person name="Bowser L."/>
            <person name="Brooks S.Y."/>
            <person name="Carninci P."/>
            <person name="Chao Q."/>
            <person name="Choy N."/>
            <person name="Enju A."/>
            <person name="Goldsmith A.D."/>
            <person name="Gurjal M."/>
            <person name="Hansen N.F."/>
            <person name="Hayashizaki Y."/>
            <person name="Johnson-Hopson C."/>
            <person name="Hsuan V.W."/>
            <person name="Iida K."/>
            <person name="Karnes M."/>
            <person name="Khan S."/>
            <person name="Koesema E."/>
            <person name="Ishida J."/>
            <person name="Jiang P.X."/>
            <person name="Jones T."/>
            <person name="Kawai J."/>
            <person name="Kamiya A."/>
            <person name="Meyers C."/>
            <person name="Nakajima M."/>
            <person name="Narusaka M."/>
            <person name="Seki M."/>
            <person name="Sakurai T."/>
            <person name="Satou M."/>
            <person name="Tamse R."/>
            <person name="Vaysberg M."/>
            <person name="Wallender E.K."/>
            <person name="Wong C."/>
            <person name="Yamamura Y."/>
            <person name="Yuan S."/>
            <person name="Shinozaki K."/>
            <person name="Davis R.W."/>
            <person name="Theologis A."/>
            <person name="Ecker J.R."/>
        </authorList>
    </citation>
    <scope>NUCLEOTIDE SEQUENCE [LARGE SCALE MRNA]</scope>
    <source>
        <strain>cv. Columbia</strain>
    </source>
</reference>
<reference key="4">
    <citation type="journal article" date="2004" name="Plant Physiol.">
        <title>The GATA family of transcription factors in Arabidopsis and rice.</title>
        <authorList>
            <person name="Reyes J.C."/>
            <person name="Muro-Pastor M.I."/>
            <person name="Florencio F.J."/>
        </authorList>
    </citation>
    <scope>GENE FAMILY ORGANIZATION</scope>
</reference>
<proteinExistence type="evidence at protein level"/>
<evidence type="ECO:0000250" key="1"/>
<evidence type="ECO:0000255" key="2"/>
<evidence type="ECO:0000255" key="3">
    <source>
        <dbReference type="PROSITE-ProRule" id="PRU00094"/>
    </source>
</evidence>
<evidence type="ECO:0000256" key="4">
    <source>
        <dbReference type="SAM" id="MobiDB-lite"/>
    </source>
</evidence>
<evidence type="ECO:0000305" key="5"/>
<name>GATA8_ARATH</name>
<feature type="chain" id="PRO_0000083439" description="GATA transcription factor 8">
    <location>
        <begin position="1"/>
        <end position="322"/>
    </location>
</feature>
<feature type="zinc finger region" description="GATA-type" evidence="3">
    <location>
        <begin position="225"/>
        <end position="279"/>
    </location>
</feature>
<feature type="region of interest" description="Disordered" evidence="4">
    <location>
        <begin position="93"/>
        <end position="168"/>
    </location>
</feature>
<feature type="short sequence motif" description="Nuclear localization signal" evidence="2">
    <location>
        <begin position="147"/>
        <end position="154"/>
    </location>
</feature>
<feature type="compositionally biased region" description="Low complexity" evidence="4">
    <location>
        <begin position="102"/>
        <end position="141"/>
    </location>
</feature>
<feature type="compositionally biased region" description="Basic residues" evidence="4">
    <location>
        <begin position="144"/>
        <end position="154"/>
    </location>
</feature>
<keyword id="KW-0010">Activator</keyword>
<keyword id="KW-0238">DNA-binding</keyword>
<keyword id="KW-0479">Metal-binding</keyword>
<keyword id="KW-0539">Nucleus</keyword>
<keyword id="KW-1185">Reference proteome</keyword>
<keyword id="KW-0804">Transcription</keyword>
<keyword id="KW-0805">Transcription regulation</keyword>
<keyword id="KW-0862">Zinc</keyword>
<keyword id="KW-0863">Zinc-finger</keyword>
<comment type="function">
    <text evidence="1">Transcriptional activator that specifically binds 5'-GATA-3' or 5'-GAT-3' motifs within gene promoters. May be involved in the regulation of some light-responsive genes (By similarity).</text>
</comment>
<comment type="interaction">
    <interactant intactId="EBI-25516007">
        <id>Q9SV30</id>
    </interactant>
    <interactant intactId="EBI-25511123">
        <id>Q9ZT70</id>
        <label>F9H3.4</label>
    </interactant>
    <organismsDiffer>false</organismsDiffer>
    <experiments>3</experiments>
</comment>
<comment type="subcellular location">
    <subcellularLocation>
        <location evidence="5">Nucleus</location>
    </subcellularLocation>
</comment>
<comment type="similarity">
    <text evidence="5">Belongs to the type IV zinc-finger family. Class A subfamily.</text>
</comment>
<protein>
    <recommendedName>
        <fullName>GATA transcription factor 8</fullName>
    </recommendedName>
</protein>
<gene>
    <name type="primary">GATA8</name>
    <name type="ordered locus">At3g54810</name>
    <name type="ORF">F28P10.210</name>
    <name type="ORF">T5N23.3</name>
</gene>
<dbReference type="EMBL" id="AL049655">
    <property type="protein sequence ID" value="CAB41103.1"/>
    <property type="molecule type" value="Genomic_DNA"/>
</dbReference>
<dbReference type="EMBL" id="AL138650">
    <property type="status" value="NOT_ANNOTATED_CDS"/>
    <property type="molecule type" value="Genomic_DNA"/>
</dbReference>
<dbReference type="EMBL" id="CP002686">
    <property type="protein sequence ID" value="AEE79293.1"/>
    <property type="molecule type" value="Genomic_DNA"/>
</dbReference>
<dbReference type="EMBL" id="CP002686">
    <property type="protein sequence ID" value="AEE79294.1"/>
    <property type="molecule type" value="Genomic_DNA"/>
</dbReference>
<dbReference type="EMBL" id="AF412107">
    <property type="protein sequence ID" value="AAL06560.1"/>
    <property type="molecule type" value="mRNA"/>
</dbReference>
<dbReference type="EMBL" id="AY078029">
    <property type="protein sequence ID" value="AAL77730.1"/>
    <property type="molecule type" value="mRNA"/>
</dbReference>
<dbReference type="PIR" id="T06739">
    <property type="entry name" value="T06739"/>
</dbReference>
<dbReference type="SMR" id="Q9SV30"/>
<dbReference type="BioGRID" id="9962">
    <property type="interactions" value="1"/>
</dbReference>
<dbReference type="FunCoup" id="Q9SV30">
    <property type="interactions" value="49"/>
</dbReference>
<dbReference type="IntAct" id="Q9SV30">
    <property type="interactions" value="1"/>
</dbReference>
<dbReference type="STRING" id="3702.Q9SV30"/>
<dbReference type="PaxDb" id="3702-AT3G54810.1"/>
<dbReference type="ProteomicsDB" id="230013"/>
<dbReference type="EnsemblPlants" id="AT3G54810.1">
    <property type="protein sequence ID" value="AT3G54810.1"/>
    <property type="gene ID" value="AT3G54810"/>
</dbReference>
<dbReference type="EnsemblPlants" id="AT3G54810.2">
    <property type="protein sequence ID" value="AT3G54810.2"/>
    <property type="gene ID" value="AT3G54810"/>
</dbReference>
<dbReference type="GeneID" id="824646"/>
<dbReference type="Gramene" id="AT3G54810.1">
    <property type="protein sequence ID" value="AT3G54810.1"/>
    <property type="gene ID" value="AT3G54810"/>
</dbReference>
<dbReference type="Gramene" id="AT3G54810.2">
    <property type="protein sequence ID" value="AT3G54810.2"/>
    <property type="gene ID" value="AT3G54810"/>
</dbReference>
<dbReference type="KEGG" id="ath:AT3G54810"/>
<dbReference type="Araport" id="AT3G54810"/>
<dbReference type="TAIR" id="AT3G54810">
    <property type="gene designation" value="BME3"/>
</dbReference>
<dbReference type="eggNOG" id="KOG1601">
    <property type="taxonomic scope" value="Eukaryota"/>
</dbReference>
<dbReference type="HOGENOM" id="CLU_045755_2_0_1"/>
<dbReference type="InParanoid" id="Q9SV30"/>
<dbReference type="OMA" id="PTIWTTH"/>
<dbReference type="PhylomeDB" id="Q9SV30"/>
<dbReference type="PRO" id="PR:Q9SV30"/>
<dbReference type="Proteomes" id="UP000006548">
    <property type="component" value="Chromosome 3"/>
</dbReference>
<dbReference type="ExpressionAtlas" id="Q9SV30">
    <property type="expression patterns" value="baseline and differential"/>
</dbReference>
<dbReference type="GO" id="GO:0005634">
    <property type="term" value="C:nucleus"/>
    <property type="evidence" value="ECO:0007669"/>
    <property type="project" value="UniProtKB-SubCell"/>
</dbReference>
<dbReference type="GO" id="GO:0003700">
    <property type="term" value="F:DNA-binding transcription factor activity"/>
    <property type="evidence" value="ECO:0000250"/>
    <property type="project" value="TAIR"/>
</dbReference>
<dbReference type="GO" id="GO:0000976">
    <property type="term" value="F:transcription cis-regulatory region binding"/>
    <property type="evidence" value="ECO:0000353"/>
    <property type="project" value="TAIR"/>
</dbReference>
<dbReference type="GO" id="GO:0008270">
    <property type="term" value="F:zinc ion binding"/>
    <property type="evidence" value="ECO:0007669"/>
    <property type="project" value="UniProtKB-KW"/>
</dbReference>
<dbReference type="GO" id="GO:0007623">
    <property type="term" value="P:circadian rhythm"/>
    <property type="evidence" value="ECO:0000270"/>
    <property type="project" value="TAIR"/>
</dbReference>
<dbReference type="GO" id="GO:0045893">
    <property type="term" value="P:positive regulation of DNA-templated transcription"/>
    <property type="evidence" value="ECO:0007669"/>
    <property type="project" value="InterPro"/>
</dbReference>
<dbReference type="GO" id="GO:0009845">
    <property type="term" value="P:seed germination"/>
    <property type="evidence" value="ECO:0000315"/>
    <property type="project" value="TAIR"/>
</dbReference>
<dbReference type="CDD" id="cd00202">
    <property type="entry name" value="ZnF_GATA"/>
    <property type="match status" value="1"/>
</dbReference>
<dbReference type="FunFam" id="3.30.50.10:FF:000018">
    <property type="entry name" value="GATA transcription factor"/>
    <property type="match status" value="1"/>
</dbReference>
<dbReference type="Gene3D" id="3.30.50.10">
    <property type="entry name" value="Erythroid Transcription Factor GATA-1, subunit A"/>
    <property type="match status" value="1"/>
</dbReference>
<dbReference type="InterPro" id="IPR051140">
    <property type="entry name" value="GATA_TF"/>
</dbReference>
<dbReference type="InterPro" id="IPR016679">
    <property type="entry name" value="TF_GATA_pln"/>
</dbReference>
<dbReference type="InterPro" id="IPR000679">
    <property type="entry name" value="Znf_GATA"/>
</dbReference>
<dbReference type="InterPro" id="IPR013088">
    <property type="entry name" value="Znf_NHR/GATA"/>
</dbReference>
<dbReference type="PANTHER" id="PTHR45658">
    <property type="entry name" value="GATA TRANSCRIPTION FACTOR"/>
    <property type="match status" value="1"/>
</dbReference>
<dbReference type="PANTHER" id="PTHR45658:SF51">
    <property type="entry name" value="GATA TRANSCRIPTION FACTOR 8"/>
    <property type="match status" value="1"/>
</dbReference>
<dbReference type="Pfam" id="PF00320">
    <property type="entry name" value="GATA"/>
    <property type="match status" value="1"/>
</dbReference>
<dbReference type="PIRSF" id="PIRSF016992">
    <property type="entry name" value="TF_GATA_plant"/>
    <property type="match status" value="1"/>
</dbReference>
<dbReference type="SMART" id="SM00401">
    <property type="entry name" value="ZnF_GATA"/>
    <property type="match status" value="1"/>
</dbReference>
<dbReference type="SUPFAM" id="SSF57716">
    <property type="entry name" value="Glucocorticoid receptor-like (DNA-binding domain)"/>
    <property type="match status" value="1"/>
</dbReference>
<dbReference type="PROSITE" id="PS00344">
    <property type="entry name" value="GATA_ZN_FINGER_1"/>
    <property type="match status" value="1"/>
</dbReference>
<dbReference type="PROSITE" id="PS50114">
    <property type="entry name" value="GATA_ZN_FINGER_2"/>
    <property type="match status" value="1"/>
</dbReference>
<organism>
    <name type="scientific">Arabidopsis thaliana</name>
    <name type="common">Mouse-ear cress</name>
    <dbReference type="NCBI Taxonomy" id="3702"/>
    <lineage>
        <taxon>Eukaryota</taxon>
        <taxon>Viridiplantae</taxon>
        <taxon>Streptophyta</taxon>
        <taxon>Embryophyta</taxon>
        <taxon>Tracheophyta</taxon>
        <taxon>Spermatophyta</taxon>
        <taxon>Magnoliopsida</taxon>
        <taxon>eudicotyledons</taxon>
        <taxon>Gunneridae</taxon>
        <taxon>Pentapetalae</taxon>
        <taxon>rosids</taxon>
        <taxon>malvids</taxon>
        <taxon>Brassicales</taxon>
        <taxon>Brassicaceae</taxon>
        <taxon>Camelineae</taxon>
        <taxon>Arabidopsis</taxon>
    </lineage>
</organism>
<sequence>MIGTSFPEDLDCGNFFDNMDDLMDFPGGDIDVGFGIGDSDSFPTIWTTHHDTWPAASDPLFSSNTNSDSSPELYVPFEDIVKVERPPSFVEETLVEKKEDSFSTNTDSSSSHSQFRSSSPVSVLESSSSSSQTTNTTSLVLPGKHGRPRTKRPRPPVQDKDRVKDNVCGGDSRLIIRIPKQFLSDHNKMINKKKKKKAKITSSSSSSGIDLEVNGNNVDSYSSEQYPLRKCMHCEVTKTPQWRLGPMGPKTLCNACGVRYKSGRLFPEYRPAASPTFTPALHSNSHKKVAEMRNKRCSDGSYITEENDLQGLIPNNAYIGVD</sequence>